<protein>
    <recommendedName>
        <fullName>ATP-dependent kinase YFH7</fullName>
        <ecNumber>2.7.1.-</ecNumber>
    </recommendedName>
</protein>
<gene>
    <name type="primary">YFH7</name>
    <name type="ordered locus">KLTH0G16808g</name>
</gene>
<comment type="function">
    <text evidence="1">ATP-dependent kinase that could be involved in endoplasmic reticulum membrane assembly.</text>
</comment>
<comment type="similarity">
    <text evidence="2">Belongs to the YFH7 family.</text>
</comment>
<sequence length="347" mass="38972">MTFETAEGLADQVLKFLSDKLETNYRVAVIVVGPPGSGKSTISEKLCHEINSRYNKYLKESGSRPHLQENLNERIDLCEGIPKFEEKSLHDVQNGFFNHVQDQDFQPKKFVDKNDGSEVVVGIGGLPNSIRVENVAPLEPSNHDYKIAKIVPMDGFHLSRRHLDHFDDPVEAHRRRGSPPTFDSNNCLQLCKLLAKTCTIKPTLPVNKTTADTGTLFDKISDTFSESVPSIYVPGFDHALKDPSTGQHCVDAFTRIIVLEGLYLLLDEDNWRDIYPTFKDTHAVIVWKLDLGVDVLEQRVAKRHLQSGLAATLEAGVERFRMNDLINALRIKEHCLAADDIVSISNK</sequence>
<name>YFH7_LACTC</name>
<reference key="1">
    <citation type="journal article" date="2009" name="Genome Res.">
        <title>Comparative genomics of protoploid Saccharomycetaceae.</title>
        <authorList>
            <consortium name="The Genolevures Consortium"/>
            <person name="Souciet J.-L."/>
            <person name="Dujon B."/>
            <person name="Gaillardin C."/>
            <person name="Johnston M."/>
            <person name="Baret P.V."/>
            <person name="Cliften P."/>
            <person name="Sherman D.J."/>
            <person name="Weissenbach J."/>
            <person name="Westhof E."/>
            <person name="Wincker P."/>
            <person name="Jubin C."/>
            <person name="Poulain J."/>
            <person name="Barbe V."/>
            <person name="Segurens B."/>
            <person name="Artiguenave F."/>
            <person name="Anthouard V."/>
            <person name="Vacherie B."/>
            <person name="Val M.-E."/>
            <person name="Fulton R.S."/>
            <person name="Minx P."/>
            <person name="Wilson R."/>
            <person name="Durrens P."/>
            <person name="Jean G."/>
            <person name="Marck C."/>
            <person name="Martin T."/>
            <person name="Nikolski M."/>
            <person name="Rolland T."/>
            <person name="Seret M.-L."/>
            <person name="Casaregola S."/>
            <person name="Despons L."/>
            <person name="Fairhead C."/>
            <person name="Fischer G."/>
            <person name="Lafontaine I."/>
            <person name="Leh V."/>
            <person name="Lemaire M."/>
            <person name="de Montigny J."/>
            <person name="Neuveglise C."/>
            <person name="Thierry A."/>
            <person name="Blanc-Lenfle I."/>
            <person name="Bleykasten C."/>
            <person name="Diffels J."/>
            <person name="Fritsch E."/>
            <person name="Frangeul L."/>
            <person name="Goeffon A."/>
            <person name="Jauniaux N."/>
            <person name="Kachouri-Lafond R."/>
            <person name="Payen C."/>
            <person name="Potier S."/>
            <person name="Pribylova L."/>
            <person name="Ozanne C."/>
            <person name="Richard G.-F."/>
            <person name="Sacerdot C."/>
            <person name="Straub M.-L."/>
            <person name="Talla E."/>
        </authorList>
    </citation>
    <scope>NUCLEOTIDE SEQUENCE [LARGE SCALE GENOMIC DNA]</scope>
    <source>
        <strain>ATCC 56472 / CBS 6340 / NRRL Y-8284</strain>
    </source>
</reference>
<evidence type="ECO:0000250" key="1"/>
<evidence type="ECO:0000305" key="2"/>
<feature type="chain" id="PRO_0000404215" description="ATP-dependent kinase YFH7">
    <location>
        <begin position="1"/>
        <end position="347"/>
    </location>
</feature>
<feature type="binding site" evidence="1">
    <location>
        <begin position="33"/>
        <end position="41"/>
    </location>
    <ligand>
        <name>ATP</name>
        <dbReference type="ChEBI" id="CHEBI:30616"/>
    </ligand>
</feature>
<organism>
    <name type="scientific">Lachancea thermotolerans (strain ATCC 56472 / CBS 6340 / NRRL Y-8284)</name>
    <name type="common">Yeast</name>
    <name type="synonym">Kluyveromyces thermotolerans</name>
    <dbReference type="NCBI Taxonomy" id="559295"/>
    <lineage>
        <taxon>Eukaryota</taxon>
        <taxon>Fungi</taxon>
        <taxon>Dikarya</taxon>
        <taxon>Ascomycota</taxon>
        <taxon>Saccharomycotina</taxon>
        <taxon>Saccharomycetes</taxon>
        <taxon>Saccharomycetales</taxon>
        <taxon>Saccharomycetaceae</taxon>
        <taxon>Lachancea</taxon>
    </lineage>
</organism>
<accession>C5DNG5</accession>
<dbReference type="EC" id="2.7.1.-"/>
<dbReference type="EMBL" id="CU928171">
    <property type="protein sequence ID" value="CAR25326.1"/>
    <property type="molecule type" value="Genomic_DNA"/>
</dbReference>
<dbReference type="RefSeq" id="XP_002555763.1">
    <property type="nucleotide sequence ID" value="XM_002555717.1"/>
</dbReference>
<dbReference type="SMR" id="C5DNG5"/>
<dbReference type="FunCoup" id="C5DNG5">
    <property type="interactions" value="22"/>
</dbReference>
<dbReference type="STRING" id="559295.C5DNG5"/>
<dbReference type="GeneID" id="8294052"/>
<dbReference type="KEGG" id="lth:KLTH0G16808g"/>
<dbReference type="eggNOG" id="KOG2702">
    <property type="taxonomic scope" value="Eukaryota"/>
</dbReference>
<dbReference type="HOGENOM" id="CLU_067202_1_0_1"/>
<dbReference type="InParanoid" id="C5DNG5"/>
<dbReference type="OMA" id="LYDQENW"/>
<dbReference type="OrthoDB" id="6362633at2759"/>
<dbReference type="Proteomes" id="UP000002036">
    <property type="component" value="Chromosome G"/>
</dbReference>
<dbReference type="GO" id="GO:0005524">
    <property type="term" value="F:ATP binding"/>
    <property type="evidence" value="ECO:0007669"/>
    <property type="project" value="UniProtKB-KW"/>
</dbReference>
<dbReference type="GO" id="GO:0016301">
    <property type="term" value="F:kinase activity"/>
    <property type="evidence" value="ECO:0007669"/>
    <property type="project" value="UniProtKB-KW"/>
</dbReference>
<dbReference type="Gene3D" id="3.40.50.300">
    <property type="entry name" value="P-loop containing nucleotide triphosphate hydrolases"/>
    <property type="match status" value="1"/>
</dbReference>
<dbReference type="InterPro" id="IPR027417">
    <property type="entry name" value="P-loop_NTPase"/>
</dbReference>
<dbReference type="PANTHER" id="PTHR10285">
    <property type="entry name" value="URIDINE KINASE"/>
    <property type="match status" value="1"/>
</dbReference>
<dbReference type="SUPFAM" id="SSF52540">
    <property type="entry name" value="P-loop containing nucleoside triphosphate hydrolases"/>
    <property type="match status" value="1"/>
</dbReference>
<keyword id="KW-0067">ATP-binding</keyword>
<keyword id="KW-0418">Kinase</keyword>
<keyword id="KW-0547">Nucleotide-binding</keyword>
<keyword id="KW-1185">Reference proteome</keyword>
<keyword id="KW-0808">Transferase</keyword>
<proteinExistence type="inferred from homology"/>